<keyword id="KW-0276">Fatty acid metabolism</keyword>
<keyword id="KW-0378">Hydrolase</keyword>
<keyword id="KW-0443">Lipid metabolism</keyword>
<keyword id="KW-0456">Lyase</keyword>
<keyword id="KW-0496">Mitochondrion</keyword>
<keyword id="KW-0645">Protease</keyword>
<keyword id="KW-1185">Reference proteome</keyword>
<keyword id="KW-0809">Transit peptide</keyword>
<proteinExistence type="evidence at transcript level"/>
<name>ECH2M_ARATH</name>
<dbReference type="EC" id="4.2.1.17" evidence="4"/>
<dbReference type="EMBL" id="Z97342">
    <property type="protein sequence ID" value="CAB10453.1"/>
    <property type="status" value="ALT_SEQ"/>
    <property type="molecule type" value="Genomic_DNA"/>
</dbReference>
<dbReference type="EMBL" id="AL161544">
    <property type="protein sequence ID" value="CAB78722.1"/>
    <property type="status" value="ALT_SEQ"/>
    <property type="molecule type" value="Genomic_DNA"/>
</dbReference>
<dbReference type="EMBL" id="CP002687">
    <property type="protein sequence ID" value="AEE83805.1"/>
    <property type="molecule type" value="Genomic_DNA"/>
</dbReference>
<dbReference type="EMBL" id="AY133698">
    <property type="protein sequence ID" value="AAM91632.1"/>
    <property type="molecule type" value="mRNA"/>
</dbReference>
<dbReference type="EMBL" id="AJ288959">
    <property type="protein sequence ID" value="CAB88078.1"/>
    <property type="molecule type" value="mRNA"/>
</dbReference>
<dbReference type="PIR" id="C71435">
    <property type="entry name" value="C71435"/>
</dbReference>
<dbReference type="RefSeq" id="NP_193413.2">
    <property type="nucleotide sequence ID" value="NM_117782.4"/>
</dbReference>
<dbReference type="SMR" id="F4JML5"/>
<dbReference type="FunCoup" id="F4JML5">
    <property type="interactions" value="1958"/>
</dbReference>
<dbReference type="STRING" id="3702.F4JML5"/>
<dbReference type="PaxDb" id="3702-AT4G16800.1"/>
<dbReference type="ProteomicsDB" id="222015"/>
<dbReference type="EnsemblPlants" id="AT4G16800.1">
    <property type="protein sequence ID" value="AT4G16800.1"/>
    <property type="gene ID" value="AT4G16800"/>
</dbReference>
<dbReference type="GeneID" id="827386"/>
<dbReference type="Gramene" id="AT4G16800.1">
    <property type="protein sequence ID" value="AT4G16800.1"/>
    <property type="gene ID" value="AT4G16800"/>
</dbReference>
<dbReference type="KEGG" id="ath:AT4G16800"/>
<dbReference type="Araport" id="AT4G16800"/>
<dbReference type="TAIR" id="AT4G16800"/>
<dbReference type="eggNOG" id="KOG1679">
    <property type="taxonomic scope" value="Eukaryota"/>
</dbReference>
<dbReference type="HOGENOM" id="CLU_009834_7_6_1"/>
<dbReference type="InParanoid" id="F4JML5"/>
<dbReference type="OMA" id="YEQAHAW"/>
<dbReference type="BRENDA" id="4.2.1.18">
    <property type="organism ID" value="399"/>
</dbReference>
<dbReference type="UniPathway" id="UPA00659"/>
<dbReference type="PRO" id="PR:F4JML5"/>
<dbReference type="Proteomes" id="UP000006548">
    <property type="component" value="Chromosome 4"/>
</dbReference>
<dbReference type="ExpressionAtlas" id="F4JML5">
    <property type="expression patterns" value="baseline and differential"/>
</dbReference>
<dbReference type="GO" id="GO:0005829">
    <property type="term" value="C:cytosol"/>
    <property type="evidence" value="ECO:0007005"/>
    <property type="project" value="TAIR"/>
</dbReference>
<dbReference type="GO" id="GO:0005739">
    <property type="term" value="C:mitochondrion"/>
    <property type="evidence" value="ECO:0000314"/>
    <property type="project" value="TAIR"/>
</dbReference>
<dbReference type="GO" id="GO:0004300">
    <property type="term" value="F:enoyl-CoA hydratase activity"/>
    <property type="evidence" value="ECO:0007669"/>
    <property type="project" value="UniProtKB-EC"/>
</dbReference>
<dbReference type="GO" id="GO:0004490">
    <property type="term" value="F:methylglutaconyl-CoA hydratase activity"/>
    <property type="evidence" value="ECO:0000314"/>
    <property type="project" value="TAIR"/>
</dbReference>
<dbReference type="GO" id="GO:0008233">
    <property type="term" value="F:peptidase activity"/>
    <property type="evidence" value="ECO:0007669"/>
    <property type="project" value="UniProtKB-KW"/>
</dbReference>
<dbReference type="GO" id="GO:0009083">
    <property type="term" value="P:branched-chain amino acid catabolic process"/>
    <property type="evidence" value="ECO:0000315"/>
    <property type="project" value="TAIR"/>
</dbReference>
<dbReference type="GO" id="GO:0006635">
    <property type="term" value="P:fatty acid beta-oxidation"/>
    <property type="evidence" value="ECO:0007669"/>
    <property type="project" value="UniProtKB-UniPathway"/>
</dbReference>
<dbReference type="GO" id="GO:0006508">
    <property type="term" value="P:proteolysis"/>
    <property type="evidence" value="ECO:0007669"/>
    <property type="project" value="UniProtKB-KW"/>
</dbReference>
<dbReference type="CDD" id="cd06558">
    <property type="entry name" value="crotonase-like"/>
    <property type="match status" value="1"/>
</dbReference>
<dbReference type="FunFam" id="3.90.226.10:FF:000061">
    <property type="entry name" value="Methylglutaconyl-CoA hydratase, mitochondrial"/>
    <property type="match status" value="1"/>
</dbReference>
<dbReference type="FunFam" id="1.10.12.10:FF:000001">
    <property type="entry name" value="Probable enoyl-CoA hydratase, mitochondrial"/>
    <property type="match status" value="1"/>
</dbReference>
<dbReference type="Gene3D" id="3.90.226.10">
    <property type="entry name" value="2-enoyl-CoA Hydratase, Chain A, domain 1"/>
    <property type="match status" value="1"/>
</dbReference>
<dbReference type="Gene3D" id="1.10.12.10">
    <property type="entry name" value="Lyase 2-enoyl-coa Hydratase, Chain A, domain 2"/>
    <property type="match status" value="1"/>
</dbReference>
<dbReference type="InterPro" id="IPR029045">
    <property type="entry name" value="ClpP/crotonase-like_dom_sf"/>
</dbReference>
<dbReference type="InterPro" id="IPR018376">
    <property type="entry name" value="Enoyl-CoA_hyd/isom_CS"/>
</dbReference>
<dbReference type="InterPro" id="IPR001753">
    <property type="entry name" value="Enoyl-CoA_hydra/iso"/>
</dbReference>
<dbReference type="InterPro" id="IPR014748">
    <property type="entry name" value="Enoyl-CoA_hydra_C"/>
</dbReference>
<dbReference type="PANTHER" id="PTHR11941">
    <property type="entry name" value="ENOYL-COA HYDRATASE-RELATED"/>
    <property type="match status" value="1"/>
</dbReference>
<dbReference type="PANTHER" id="PTHR11941:SF171">
    <property type="entry name" value="SD19268P"/>
    <property type="match status" value="1"/>
</dbReference>
<dbReference type="Pfam" id="PF00378">
    <property type="entry name" value="ECH_1"/>
    <property type="match status" value="1"/>
</dbReference>
<dbReference type="SUPFAM" id="SSF52096">
    <property type="entry name" value="ClpP/crotonase"/>
    <property type="match status" value="1"/>
</dbReference>
<dbReference type="PROSITE" id="PS00166">
    <property type="entry name" value="ENOYL_COA_HYDRATASE"/>
    <property type="match status" value="1"/>
</dbReference>
<comment type="function">
    <text evidence="1">Straight-chain enoyl-CoA thioesters from C4 up to at least C16 are processed, although with decreasing catalytic rate.</text>
</comment>
<comment type="catalytic activity">
    <reaction evidence="4">
        <text>a (3S)-3-hydroxyacyl-CoA = a (2E)-enoyl-CoA + H2O</text>
        <dbReference type="Rhea" id="RHEA:16105"/>
        <dbReference type="ChEBI" id="CHEBI:15377"/>
        <dbReference type="ChEBI" id="CHEBI:57318"/>
        <dbReference type="ChEBI" id="CHEBI:58856"/>
        <dbReference type="EC" id="4.2.1.17"/>
    </reaction>
</comment>
<comment type="catalytic activity">
    <reaction evidence="4">
        <text>a 4-saturated-(3S)-3-hydroxyacyl-CoA = a (3E)-enoyl-CoA + H2O</text>
        <dbReference type="Rhea" id="RHEA:20724"/>
        <dbReference type="ChEBI" id="CHEBI:15377"/>
        <dbReference type="ChEBI" id="CHEBI:58521"/>
        <dbReference type="ChEBI" id="CHEBI:137480"/>
        <dbReference type="EC" id="4.2.1.17"/>
    </reaction>
</comment>
<comment type="pathway">
    <text evidence="4">Lipid metabolism; fatty acid beta-oxidation.</text>
</comment>
<comment type="subcellular location">
    <subcellularLocation>
        <location evidence="3">Mitochondrion</location>
    </subcellularLocation>
</comment>
<comment type="similarity">
    <text evidence="4">Belongs to the enoyl-CoA hydratase/isomerase family.</text>
</comment>
<comment type="sequence caution" evidence="4">
    <conflict type="erroneous gene model prediction">
        <sequence resource="EMBL-CDS" id="CAB10453"/>
    </conflict>
</comment>
<comment type="sequence caution" evidence="4">
    <conflict type="erroneous gene model prediction">
        <sequence resource="EMBL-CDS" id="CAB78722"/>
    </conflict>
</comment>
<feature type="transit peptide" description="Mitochondrion" evidence="4">
    <location>
        <begin position="1"/>
        <end position="32"/>
    </location>
</feature>
<feature type="chain" id="PRO_0000435430" description="Probable enoyl-CoA hydratase 2, mitochondrial">
    <location>
        <begin position="33"/>
        <end position="301"/>
    </location>
</feature>
<feature type="binding site" evidence="2">
    <location>
        <begin position="105"/>
        <end position="109"/>
    </location>
    <ligand>
        <name>substrate</name>
    </ligand>
</feature>
<feature type="binding site" evidence="2">
    <location>
        <position position="152"/>
    </location>
    <ligand>
        <name>substrate</name>
    </ligand>
</feature>
<feature type="site" description="Important for catalytic activity" evidence="2">
    <location>
        <position position="175"/>
    </location>
</feature>
<accession>F4JML5</accession>
<accession>O23520</accession>
<accession>Q9M3R5</accession>
<protein>
    <recommendedName>
        <fullName evidence="4">Probable enoyl-CoA hydratase 2, mitochondrial</fullName>
        <ecNumber evidence="4">4.2.1.17</ecNumber>
    </recommendedName>
</protein>
<evidence type="ECO:0000250" key="1">
    <source>
        <dbReference type="UniProtKB" id="P30084"/>
    </source>
</evidence>
<evidence type="ECO:0000250" key="2">
    <source>
        <dbReference type="UniProtKB" id="P42126"/>
    </source>
</evidence>
<evidence type="ECO:0000255" key="3"/>
<evidence type="ECO:0000305" key="4"/>
<evidence type="ECO:0000312" key="5">
    <source>
        <dbReference type="Araport" id="AT4G16800"/>
    </source>
</evidence>
<evidence type="ECO:0000312" key="6">
    <source>
        <dbReference type="EMBL" id="CAB10453.1"/>
    </source>
</evidence>
<reference key="1">
    <citation type="journal article" date="1998" name="Nature">
        <title>Analysis of 1.9 Mb of contiguous sequence from chromosome 4 of Arabidopsis thaliana.</title>
        <authorList>
            <person name="Bevan M."/>
            <person name="Bancroft I."/>
            <person name="Bent E."/>
            <person name="Love K."/>
            <person name="Goodman H.M."/>
            <person name="Dean C."/>
            <person name="Bergkamp R."/>
            <person name="Dirkse W."/>
            <person name="van Staveren M."/>
            <person name="Stiekema W."/>
            <person name="Drost L."/>
            <person name="Ridley P."/>
            <person name="Hudson S.-A."/>
            <person name="Patel K."/>
            <person name="Murphy G."/>
            <person name="Piffanelli P."/>
            <person name="Wedler H."/>
            <person name="Wedler E."/>
            <person name="Wambutt R."/>
            <person name="Weitzenegger T."/>
            <person name="Pohl T."/>
            <person name="Terryn N."/>
            <person name="Gielen J."/>
            <person name="Villarroel R."/>
            <person name="De Clercq R."/>
            <person name="van Montagu M."/>
            <person name="Lecharny A."/>
            <person name="Aubourg S."/>
            <person name="Gy I."/>
            <person name="Kreis M."/>
            <person name="Lao N."/>
            <person name="Kavanagh T."/>
            <person name="Hempel S."/>
            <person name="Kotter P."/>
            <person name="Entian K.-D."/>
            <person name="Rieger M."/>
            <person name="Schaefer M."/>
            <person name="Funk B."/>
            <person name="Mueller-Auer S."/>
            <person name="Silvey M."/>
            <person name="James R."/>
            <person name="Monfort A."/>
            <person name="Pons A."/>
            <person name="Puigdomenech P."/>
            <person name="Douka A."/>
            <person name="Voukelatou E."/>
            <person name="Milioni D."/>
            <person name="Hatzopoulos P."/>
            <person name="Piravandi E."/>
            <person name="Obermaier B."/>
            <person name="Hilbert H."/>
            <person name="Duesterhoeft A."/>
            <person name="Moores T."/>
            <person name="Jones J.D.G."/>
            <person name="Eneva T."/>
            <person name="Palme K."/>
            <person name="Benes V."/>
            <person name="Rechmann S."/>
            <person name="Ansorge W."/>
            <person name="Cooke R."/>
            <person name="Berger C."/>
            <person name="Delseny M."/>
            <person name="Voet M."/>
            <person name="Volckaert G."/>
            <person name="Mewes H.-W."/>
            <person name="Klosterman S."/>
            <person name="Schueller C."/>
            <person name="Chalwatzis N."/>
        </authorList>
    </citation>
    <scope>NUCLEOTIDE SEQUENCE [LARGE SCALE GENOMIC DNA]</scope>
    <source>
        <strain>cv. Columbia</strain>
    </source>
</reference>
<reference key="2">
    <citation type="journal article" date="1999" name="Nature">
        <title>Sequence and analysis of chromosome 4 of the plant Arabidopsis thaliana.</title>
        <authorList>
            <person name="Mayer K.F.X."/>
            <person name="Schueller C."/>
            <person name="Wambutt R."/>
            <person name="Murphy G."/>
            <person name="Volckaert G."/>
            <person name="Pohl T."/>
            <person name="Duesterhoeft A."/>
            <person name="Stiekema W."/>
            <person name="Entian K.-D."/>
            <person name="Terryn N."/>
            <person name="Harris B."/>
            <person name="Ansorge W."/>
            <person name="Brandt P."/>
            <person name="Grivell L.A."/>
            <person name="Rieger M."/>
            <person name="Weichselgartner M."/>
            <person name="de Simone V."/>
            <person name="Obermaier B."/>
            <person name="Mache R."/>
            <person name="Mueller M."/>
            <person name="Kreis M."/>
            <person name="Delseny M."/>
            <person name="Puigdomenech P."/>
            <person name="Watson M."/>
            <person name="Schmidtheini T."/>
            <person name="Reichert B."/>
            <person name="Portetelle D."/>
            <person name="Perez-Alonso M."/>
            <person name="Boutry M."/>
            <person name="Bancroft I."/>
            <person name="Vos P."/>
            <person name="Hoheisel J."/>
            <person name="Zimmermann W."/>
            <person name="Wedler H."/>
            <person name="Ridley P."/>
            <person name="Langham S.-A."/>
            <person name="McCullagh B."/>
            <person name="Bilham L."/>
            <person name="Robben J."/>
            <person name="van der Schueren J."/>
            <person name="Grymonprez B."/>
            <person name="Chuang Y.-J."/>
            <person name="Vandenbussche F."/>
            <person name="Braeken M."/>
            <person name="Weltjens I."/>
            <person name="Voet M."/>
            <person name="Bastiaens I."/>
            <person name="Aert R."/>
            <person name="Defoor E."/>
            <person name="Weitzenegger T."/>
            <person name="Bothe G."/>
            <person name="Ramsperger U."/>
            <person name="Hilbert H."/>
            <person name="Braun M."/>
            <person name="Holzer E."/>
            <person name="Brandt A."/>
            <person name="Peters S."/>
            <person name="van Staveren M."/>
            <person name="Dirkse W."/>
            <person name="Mooijman P."/>
            <person name="Klein Lankhorst R."/>
            <person name="Rose M."/>
            <person name="Hauf J."/>
            <person name="Koetter P."/>
            <person name="Berneiser S."/>
            <person name="Hempel S."/>
            <person name="Feldpausch M."/>
            <person name="Lamberth S."/>
            <person name="Van den Daele H."/>
            <person name="De Keyser A."/>
            <person name="Buysshaert C."/>
            <person name="Gielen J."/>
            <person name="Villarroel R."/>
            <person name="De Clercq R."/>
            <person name="van Montagu M."/>
            <person name="Rogers J."/>
            <person name="Cronin A."/>
            <person name="Quail M.A."/>
            <person name="Bray-Allen S."/>
            <person name="Clark L."/>
            <person name="Doggett J."/>
            <person name="Hall S."/>
            <person name="Kay M."/>
            <person name="Lennard N."/>
            <person name="McLay K."/>
            <person name="Mayes R."/>
            <person name="Pettett A."/>
            <person name="Rajandream M.A."/>
            <person name="Lyne M."/>
            <person name="Benes V."/>
            <person name="Rechmann S."/>
            <person name="Borkova D."/>
            <person name="Bloecker H."/>
            <person name="Scharfe M."/>
            <person name="Grimm M."/>
            <person name="Loehnert T.-H."/>
            <person name="Dose S."/>
            <person name="de Haan M."/>
            <person name="Maarse A.C."/>
            <person name="Schaefer M."/>
            <person name="Mueller-Auer S."/>
            <person name="Gabel C."/>
            <person name="Fuchs M."/>
            <person name="Fartmann B."/>
            <person name="Granderath K."/>
            <person name="Dauner D."/>
            <person name="Herzl A."/>
            <person name="Neumann S."/>
            <person name="Argiriou A."/>
            <person name="Vitale D."/>
            <person name="Liguori R."/>
            <person name="Piravandi E."/>
            <person name="Massenet O."/>
            <person name="Quigley F."/>
            <person name="Clabauld G."/>
            <person name="Muendlein A."/>
            <person name="Felber R."/>
            <person name="Schnabl S."/>
            <person name="Hiller R."/>
            <person name="Schmidt W."/>
            <person name="Lecharny A."/>
            <person name="Aubourg S."/>
            <person name="Chefdor F."/>
            <person name="Cooke R."/>
            <person name="Berger C."/>
            <person name="Monfort A."/>
            <person name="Casacuberta E."/>
            <person name="Gibbons T."/>
            <person name="Weber N."/>
            <person name="Vandenbol M."/>
            <person name="Bargues M."/>
            <person name="Terol J."/>
            <person name="Torres A."/>
            <person name="Perez-Perez A."/>
            <person name="Purnelle B."/>
            <person name="Bent E."/>
            <person name="Johnson S."/>
            <person name="Tacon D."/>
            <person name="Jesse T."/>
            <person name="Heijnen L."/>
            <person name="Schwarz S."/>
            <person name="Scholler P."/>
            <person name="Heber S."/>
            <person name="Francs P."/>
            <person name="Bielke C."/>
            <person name="Frishman D."/>
            <person name="Haase D."/>
            <person name="Lemcke K."/>
            <person name="Mewes H.-W."/>
            <person name="Stocker S."/>
            <person name="Zaccaria P."/>
            <person name="Bevan M."/>
            <person name="Wilson R.K."/>
            <person name="de la Bastide M."/>
            <person name="Habermann K."/>
            <person name="Parnell L."/>
            <person name="Dedhia N."/>
            <person name="Gnoj L."/>
            <person name="Schutz K."/>
            <person name="Huang E."/>
            <person name="Spiegel L."/>
            <person name="Sekhon M."/>
            <person name="Murray J."/>
            <person name="Sheet P."/>
            <person name="Cordes M."/>
            <person name="Abu-Threideh J."/>
            <person name="Stoneking T."/>
            <person name="Kalicki J."/>
            <person name="Graves T."/>
            <person name="Harmon G."/>
            <person name="Edwards J."/>
            <person name="Latreille P."/>
            <person name="Courtney L."/>
            <person name="Cloud J."/>
            <person name="Abbott A."/>
            <person name="Scott K."/>
            <person name="Johnson D."/>
            <person name="Minx P."/>
            <person name="Bentley D."/>
            <person name="Fulton B."/>
            <person name="Miller N."/>
            <person name="Greco T."/>
            <person name="Kemp K."/>
            <person name="Kramer J."/>
            <person name="Fulton L."/>
            <person name="Mardis E."/>
            <person name="Dante M."/>
            <person name="Pepin K."/>
            <person name="Hillier L.W."/>
            <person name="Nelson J."/>
            <person name="Spieth J."/>
            <person name="Ryan E."/>
            <person name="Andrews S."/>
            <person name="Geisel C."/>
            <person name="Layman D."/>
            <person name="Du H."/>
            <person name="Ali J."/>
            <person name="Berghoff A."/>
            <person name="Jones K."/>
            <person name="Drone K."/>
            <person name="Cotton M."/>
            <person name="Joshu C."/>
            <person name="Antonoiu B."/>
            <person name="Zidanic M."/>
            <person name="Strong C."/>
            <person name="Sun H."/>
            <person name="Lamar B."/>
            <person name="Yordan C."/>
            <person name="Ma P."/>
            <person name="Zhong J."/>
            <person name="Preston R."/>
            <person name="Vil D."/>
            <person name="Shekher M."/>
            <person name="Matero A."/>
            <person name="Shah R."/>
            <person name="Swaby I.K."/>
            <person name="O'Shaughnessy A."/>
            <person name="Rodriguez M."/>
            <person name="Hoffman J."/>
            <person name="Till S."/>
            <person name="Granat S."/>
            <person name="Shohdy N."/>
            <person name="Hasegawa A."/>
            <person name="Hameed A."/>
            <person name="Lodhi M."/>
            <person name="Johnson A."/>
            <person name="Chen E."/>
            <person name="Marra M.A."/>
            <person name="Martienssen R."/>
            <person name="McCombie W.R."/>
        </authorList>
    </citation>
    <scope>NUCLEOTIDE SEQUENCE [LARGE SCALE GENOMIC DNA]</scope>
    <source>
        <strain>cv. Columbia</strain>
    </source>
</reference>
<reference key="3">
    <citation type="journal article" date="2017" name="Plant J.">
        <title>Araport11: a complete reannotation of the Arabidopsis thaliana reference genome.</title>
        <authorList>
            <person name="Cheng C.Y."/>
            <person name="Krishnakumar V."/>
            <person name="Chan A.P."/>
            <person name="Thibaud-Nissen F."/>
            <person name="Schobel S."/>
            <person name="Town C.D."/>
        </authorList>
    </citation>
    <scope>GENOME REANNOTATION</scope>
    <source>
        <strain>cv. Columbia</strain>
    </source>
</reference>
<reference key="4">
    <citation type="journal article" date="2003" name="Science">
        <title>Empirical analysis of transcriptional activity in the Arabidopsis genome.</title>
        <authorList>
            <person name="Yamada K."/>
            <person name="Lim J."/>
            <person name="Dale J.M."/>
            <person name="Chen H."/>
            <person name="Shinn P."/>
            <person name="Palm C.J."/>
            <person name="Southwick A.M."/>
            <person name="Wu H.C."/>
            <person name="Kim C.J."/>
            <person name="Nguyen M."/>
            <person name="Pham P.K."/>
            <person name="Cheuk R.F."/>
            <person name="Karlin-Newmann G."/>
            <person name="Liu S.X."/>
            <person name="Lam B."/>
            <person name="Sakano H."/>
            <person name="Wu T."/>
            <person name="Yu G."/>
            <person name="Miranda M."/>
            <person name="Quach H.L."/>
            <person name="Tripp M."/>
            <person name="Chang C.H."/>
            <person name="Lee J.M."/>
            <person name="Toriumi M.J."/>
            <person name="Chan M.M."/>
            <person name="Tang C.C."/>
            <person name="Onodera C.S."/>
            <person name="Deng J.M."/>
            <person name="Akiyama K."/>
            <person name="Ansari Y."/>
            <person name="Arakawa T."/>
            <person name="Banh J."/>
            <person name="Banno F."/>
            <person name="Bowser L."/>
            <person name="Brooks S.Y."/>
            <person name="Carninci P."/>
            <person name="Chao Q."/>
            <person name="Choy N."/>
            <person name="Enju A."/>
            <person name="Goldsmith A.D."/>
            <person name="Gurjal M."/>
            <person name="Hansen N.F."/>
            <person name="Hayashizaki Y."/>
            <person name="Johnson-Hopson C."/>
            <person name="Hsuan V.W."/>
            <person name="Iida K."/>
            <person name="Karnes M."/>
            <person name="Khan S."/>
            <person name="Koesema E."/>
            <person name="Ishida J."/>
            <person name="Jiang P.X."/>
            <person name="Jones T."/>
            <person name="Kawai J."/>
            <person name="Kamiya A."/>
            <person name="Meyers C."/>
            <person name="Nakajima M."/>
            <person name="Narusaka M."/>
            <person name="Seki M."/>
            <person name="Sakurai T."/>
            <person name="Satou M."/>
            <person name="Tamse R."/>
            <person name="Vaysberg M."/>
            <person name="Wallender E.K."/>
            <person name="Wong C."/>
            <person name="Yamamura Y."/>
            <person name="Yuan S."/>
            <person name="Shinozaki K."/>
            <person name="Davis R.W."/>
            <person name="Theologis A."/>
            <person name="Ecker J.R."/>
        </authorList>
    </citation>
    <scope>NUCLEOTIDE SEQUENCE [LARGE SCALE MRNA] OF 73-301</scope>
    <source>
        <strain>cv. Columbia</strain>
    </source>
</reference>
<reference key="5">
    <citation type="journal article" date="2000" name="Plant J.">
        <title>Comparative genome analysis reveals extensive conservation of genome organisation for Arabidopsis thaliana and Capsella rubella.</title>
        <authorList>
            <person name="Acarkan A."/>
            <person name="Rossberg M."/>
            <person name="Koch M."/>
            <person name="Schmidt R."/>
        </authorList>
    </citation>
    <scope>NUCLEOTIDE SEQUENCE [MRNA] OF 85-301</scope>
</reference>
<organism>
    <name type="scientific">Arabidopsis thaliana</name>
    <name type="common">Mouse-ear cress</name>
    <dbReference type="NCBI Taxonomy" id="3702"/>
    <lineage>
        <taxon>Eukaryota</taxon>
        <taxon>Viridiplantae</taxon>
        <taxon>Streptophyta</taxon>
        <taxon>Embryophyta</taxon>
        <taxon>Tracheophyta</taxon>
        <taxon>Spermatophyta</taxon>
        <taxon>Magnoliopsida</taxon>
        <taxon>eudicotyledons</taxon>
        <taxon>Gunneridae</taxon>
        <taxon>Pentapetalae</taxon>
        <taxon>rosids</taxon>
        <taxon>malvids</taxon>
        <taxon>Brassicales</taxon>
        <taxon>Brassicaceae</taxon>
        <taxon>Camelineae</taxon>
        <taxon>Arabidopsis</taxon>
    </lineage>
</organism>
<gene>
    <name evidence="5" type="ordered locus">At4g16800</name>
    <name evidence="6" type="ORF">dl4425c</name>
</gene>
<sequence length="301" mass="32788">MSFVKYLRRDNLLQLAGKPSLSRNYILQTCRTLIIETSPPEFVKLNRLSGSDSGIIEVNLDRPVTKNAINKEMLKSLQNAFESIHQDNSARVVMIRSLVPGVFCAGADLKERRTMSPSEVHTYVNSLRYMFSFIEALSIPTIAAIEGAALGGGLEMALACDLRICGENAVFGLPETGLAIIPGAGGTQRLSRLVGRSVSKELIFTGRKIDAIEAANKGLVNICVTAGEAHEKAIEMAQQINEKGPLAIKMAKKAIDEGIETNMASGLEVEEMCYQKLLNTQDRLEGLAAFAEKRKPLYTGN</sequence>